<accession>P0AAV7</accession>
<accession>P75758</accession>
<name>YBGS_SHIFL</name>
<dbReference type="EMBL" id="AE005674">
    <property type="protein sequence ID" value="AAN42195.1"/>
    <property type="molecule type" value="Genomic_DNA"/>
</dbReference>
<dbReference type="EMBL" id="AE014073">
    <property type="protein sequence ID" value="AAP16068.1"/>
    <property type="molecule type" value="Genomic_DNA"/>
</dbReference>
<dbReference type="RefSeq" id="NP_706488.1">
    <property type="nucleotide sequence ID" value="NC_004337.2"/>
</dbReference>
<dbReference type="RefSeq" id="WP_000784351.1">
    <property type="nucleotide sequence ID" value="NZ_WPGW01000046.1"/>
</dbReference>
<dbReference type="STRING" id="198214.SF0551"/>
<dbReference type="PaxDb" id="198214-SF0551"/>
<dbReference type="GeneID" id="1027543"/>
<dbReference type="KEGG" id="sfl:SF0551"/>
<dbReference type="KEGG" id="sfx:S0559"/>
<dbReference type="PATRIC" id="fig|198214.7.peg.640"/>
<dbReference type="HOGENOM" id="CLU_161896_0_0_6"/>
<dbReference type="Proteomes" id="UP000001006">
    <property type="component" value="Chromosome"/>
</dbReference>
<dbReference type="Proteomes" id="UP000002673">
    <property type="component" value="Chromosome"/>
</dbReference>
<dbReference type="InterPro" id="IPR020363">
    <property type="entry name" value="Uncharacterised_YbgS"/>
</dbReference>
<dbReference type="Pfam" id="PF13985">
    <property type="entry name" value="YbgS"/>
    <property type="match status" value="1"/>
</dbReference>
<organism>
    <name type="scientific">Shigella flexneri</name>
    <dbReference type="NCBI Taxonomy" id="623"/>
    <lineage>
        <taxon>Bacteria</taxon>
        <taxon>Pseudomonadati</taxon>
        <taxon>Pseudomonadota</taxon>
        <taxon>Gammaproteobacteria</taxon>
        <taxon>Enterobacterales</taxon>
        <taxon>Enterobacteriaceae</taxon>
        <taxon>Shigella</taxon>
    </lineage>
</organism>
<feature type="signal peptide" evidence="1">
    <location>
        <begin position="1"/>
        <end position="24"/>
    </location>
</feature>
<feature type="chain" id="PRO_0000042560" description="Uncharacterized protein YbgS">
    <location>
        <begin position="25"/>
        <end position="126"/>
    </location>
</feature>
<feature type="region of interest" description="Disordered" evidence="2">
    <location>
        <begin position="27"/>
        <end position="126"/>
    </location>
</feature>
<feature type="compositionally biased region" description="Low complexity" evidence="2">
    <location>
        <begin position="27"/>
        <end position="47"/>
    </location>
</feature>
<feature type="compositionally biased region" description="Polar residues" evidence="2">
    <location>
        <begin position="54"/>
        <end position="64"/>
    </location>
</feature>
<feature type="compositionally biased region" description="Basic and acidic residues" evidence="2">
    <location>
        <begin position="84"/>
        <end position="105"/>
    </location>
</feature>
<feature type="compositionally biased region" description="Basic and acidic residues" evidence="2">
    <location>
        <begin position="117"/>
        <end position="126"/>
    </location>
</feature>
<protein>
    <recommendedName>
        <fullName>Uncharacterized protein YbgS</fullName>
    </recommendedName>
</protein>
<sequence length="126" mass="12872">MKMTKLATLFLTATLSLASGAALAADSGAQTNNGQANAAADAGQVAPDARENVAPNNVDNNGVNTGSGGTMLHSDGSSMNNDGMTKDEEHKNTMCKDGRCPDINKKVQTGDGINNDVDTKTDGTTQ</sequence>
<reference key="1">
    <citation type="journal article" date="2002" name="Nucleic Acids Res.">
        <title>Genome sequence of Shigella flexneri 2a: insights into pathogenicity through comparison with genomes of Escherichia coli K12 and O157.</title>
        <authorList>
            <person name="Jin Q."/>
            <person name="Yuan Z."/>
            <person name="Xu J."/>
            <person name="Wang Y."/>
            <person name="Shen Y."/>
            <person name="Lu W."/>
            <person name="Wang J."/>
            <person name="Liu H."/>
            <person name="Yang J."/>
            <person name="Yang F."/>
            <person name="Zhang X."/>
            <person name="Zhang J."/>
            <person name="Yang G."/>
            <person name="Wu H."/>
            <person name="Qu D."/>
            <person name="Dong J."/>
            <person name="Sun L."/>
            <person name="Xue Y."/>
            <person name="Zhao A."/>
            <person name="Gao Y."/>
            <person name="Zhu J."/>
            <person name="Kan B."/>
            <person name="Ding K."/>
            <person name="Chen S."/>
            <person name="Cheng H."/>
            <person name="Yao Z."/>
            <person name="He B."/>
            <person name="Chen R."/>
            <person name="Ma D."/>
            <person name="Qiang B."/>
            <person name="Wen Y."/>
            <person name="Hou Y."/>
            <person name="Yu J."/>
        </authorList>
    </citation>
    <scope>NUCLEOTIDE SEQUENCE [LARGE SCALE GENOMIC DNA]</scope>
    <source>
        <strain>301 / Serotype 2a</strain>
    </source>
</reference>
<reference key="2">
    <citation type="journal article" date="2003" name="Infect. Immun.">
        <title>Complete genome sequence and comparative genomics of Shigella flexneri serotype 2a strain 2457T.</title>
        <authorList>
            <person name="Wei J."/>
            <person name="Goldberg M.B."/>
            <person name="Burland V."/>
            <person name="Venkatesan M.M."/>
            <person name="Deng W."/>
            <person name="Fournier G."/>
            <person name="Mayhew G.F."/>
            <person name="Plunkett G. III"/>
            <person name="Rose D.J."/>
            <person name="Darling A."/>
            <person name="Mau B."/>
            <person name="Perna N.T."/>
            <person name="Payne S.M."/>
            <person name="Runyen-Janecky L.J."/>
            <person name="Zhou S."/>
            <person name="Schwartz D.C."/>
            <person name="Blattner F.R."/>
        </authorList>
    </citation>
    <scope>NUCLEOTIDE SEQUENCE [LARGE SCALE GENOMIC DNA]</scope>
    <source>
        <strain>ATCC 700930 / 2457T / Serotype 2a</strain>
    </source>
</reference>
<evidence type="ECO:0000255" key="1"/>
<evidence type="ECO:0000256" key="2">
    <source>
        <dbReference type="SAM" id="MobiDB-lite"/>
    </source>
</evidence>
<keyword id="KW-1185">Reference proteome</keyword>
<keyword id="KW-0732">Signal</keyword>
<proteinExistence type="inferred from homology"/>
<gene>
    <name type="primary">ybgS</name>
    <name type="ordered locus">SF0551</name>
    <name type="ordered locus">S0559</name>
</gene>